<sequence length="124" mass="13745">MATINQLVRKPRVRQKQKSNVPALQACPQKRGVCTRVYTTTPKKPNSAMRKVARIRLTNGMEVTSYIGGEGHNLQEHSVVLIRGGRVKDLPGVRYHIVRGSLDTAGVGDRRQGRSKYGAKRPKG</sequence>
<evidence type="ECO:0000250" key="1"/>
<evidence type="ECO:0000255" key="2">
    <source>
        <dbReference type="HAMAP-Rule" id="MF_00403"/>
    </source>
</evidence>
<evidence type="ECO:0000256" key="3">
    <source>
        <dbReference type="SAM" id="MobiDB-lite"/>
    </source>
</evidence>
<evidence type="ECO:0000305" key="4"/>
<comment type="function">
    <text evidence="2">With S4 and S5 plays an important role in translational accuracy.</text>
</comment>
<comment type="function">
    <text evidence="2">Interacts with and stabilizes bases of the 16S rRNA that are involved in tRNA selection in the A site and with the mRNA backbone. Located at the interface of the 30S and 50S subunits, it traverses the body of the 30S subunit contacting proteins on the other side and probably holding the rRNA structure together. The combined cluster of proteins S8, S12 and S17 appears to hold together the shoulder and platform of the 30S subunit.</text>
</comment>
<comment type="subunit">
    <text evidence="2">Part of the 30S ribosomal subunit. Contacts proteins S8 and S17. May interact with IF1 in the 30S initiation complex.</text>
</comment>
<comment type="similarity">
    <text evidence="2">Belongs to the universal ribosomal protein uS12 family.</text>
</comment>
<feature type="chain" id="PRO_0000226399" description="Small ribosomal subunit protein uS12">
    <location>
        <begin position="1"/>
        <end position="124"/>
    </location>
</feature>
<feature type="region of interest" description="Disordered" evidence="3">
    <location>
        <begin position="1"/>
        <end position="23"/>
    </location>
</feature>
<feature type="region of interest" description="Disordered" evidence="3">
    <location>
        <begin position="103"/>
        <end position="124"/>
    </location>
</feature>
<feature type="compositionally biased region" description="Basic residues" evidence="3">
    <location>
        <begin position="113"/>
        <end position="124"/>
    </location>
</feature>
<feature type="modified residue" description="3-methylthioaspartic acid" evidence="1">
    <location>
        <position position="89"/>
    </location>
</feature>
<gene>
    <name evidence="2" type="primary">rpsL</name>
    <name type="ordered locus">Noc_2329</name>
</gene>
<name>RS12_NITOC</name>
<keyword id="KW-0488">Methylation</keyword>
<keyword id="KW-1185">Reference proteome</keyword>
<keyword id="KW-0687">Ribonucleoprotein</keyword>
<keyword id="KW-0689">Ribosomal protein</keyword>
<keyword id="KW-0694">RNA-binding</keyword>
<keyword id="KW-0699">rRNA-binding</keyword>
<keyword id="KW-0820">tRNA-binding</keyword>
<protein>
    <recommendedName>
        <fullName evidence="2">Small ribosomal subunit protein uS12</fullName>
    </recommendedName>
    <alternativeName>
        <fullName evidence="4">30S ribosomal protein S12</fullName>
    </alternativeName>
</protein>
<dbReference type="EMBL" id="CP000127">
    <property type="protein sequence ID" value="ABA58787.1"/>
    <property type="molecule type" value="Genomic_DNA"/>
</dbReference>
<dbReference type="RefSeq" id="WP_011330931.1">
    <property type="nucleotide sequence ID" value="NC_007484.1"/>
</dbReference>
<dbReference type="SMR" id="Q3J8Q9"/>
<dbReference type="FunCoup" id="Q3J8Q9">
    <property type="interactions" value="552"/>
</dbReference>
<dbReference type="STRING" id="323261.Noc_2329"/>
<dbReference type="KEGG" id="noc:Noc_2329"/>
<dbReference type="eggNOG" id="COG0048">
    <property type="taxonomic scope" value="Bacteria"/>
</dbReference>
<dbReference type="HOGENOM" id="CLU_104295_1_2_6"/>
<dbReference type="InParanoid" id="Q3J8Q9"/>
<dbReference type="Proteomes" id="UP000006838">
    <property type="component" value="Chromosome"/>
</dbReference>
<dbReference type="GO" id="GO:0015935">
    <property type="term" value="C:small ribosomal subunit"/>
    <property type="evidence" value="ECO:0007669"/>
    <property type="project" value="InterPro"/>
</dbReference>
<dbReference type="GO" id="GO:0019843">
    <property type="term" value="F:rRNA binding"/>
    <property type="evidence" value="ECO:0007669"/>
    <property type="project" value="UniProtKB-UniRule"/>
</dbReference>
<dbReference type="GO" id="GO:0003735">
    <property type="term" value="F:structural constituent of ribosome"/>
    <property type="evidence" value="ECO:0007669"/>
    <property type="project" value="InterPro"/>
</dbReference>
<dbReference type="GO" id="GO:0000049">
    <property type="term" value="F:tRNA binding"/>
    <property type="evidence" value="ECO:0007669"/>
    <property type="project" value="UniProtKB-UniRule"/>
</dbReference>
<dbReference type="GO" id="GO:0006412">
    <property type="term" value="P:translation"/>
    <property type="evidence" value="ECO:0007669"/>
    <property type="project" value="UniProtKB-UniRule"/>
</dbReference>
<dbReference type="CDD" id="cd03368">
    <property type="entry name" value="Ribosomal_S12"/>
    <property type="match status" value="1"/>
</dbReference>
<dbReference type="FunFam" id="2.40.50.140:FF:000001">
    <property type="entry name" value="30S ribosomal protein S12"/>
    <property type="match status" value="1"/>
</dbReference>
<dbReference type="Gene3D" id="2.40.50.140">
    <property type="entry name" value="Nucleic acid-binding proteins"/>
    <property type="match status" value="1"/>
</dbReference>
<dbReference type="HAMAP" id="MF_00403_B">
    <property type="entry name" value="Ribosomal_uS12_B"/>
    <property type="match status" value="1"/>
</dbReference>
<dbReference type="InterPro" id="IPR012340">
    <property type="entry name" value="NA-bd_OB-fold"/>
</dbReference>
<dbReference type="InterPro" id="IPR006032">
    <property type="entry name" value="Ribosomal_uS12"/>
</dbReference>
<dbReference type="InterPro" id="IPR005679">
    <property type="entry name" value="Ribosomal_uS12_bac"/>
</dbReference>
<dbReference type="NCBIfam" id="TIGR00981">
    <property type="entry name" value="rpsL_bact"/>
    <property type="match status" value="1"/>
</dbReference>
<dbReference type="PANTHER" id="PTHR11652">
    <property type="entry name" value="30S RIBOSOMAL PROTEIN S12 FAMILY MEMBER"/>
    <property type="match status" value="1"/>
</dbReference>
<dbReference type="Pfam" id="PF00164">
    <property type="entry name" value="Ribosom_S12_S23"/>
    <property type="match status" value="1"/>
</dbReference>
<dbReference type="PIRSF" id="PIRSF002133">
    <property type="entry name" value="Ribosomal_S12/S23"/>
    <property type="match status" value="1"/>
</dbReference>
<dbReference type="PRINTS" id="PR01034">
    <property type="entry name" value="RIBOSOMALS12"/>
</dbReference>
<dbReference type="SUPFAM" id="SSF50249">
    <property type="entry name" value="Nucleic acid-binding proteins"/>
    <property type="match status" value="1"/>
</dbReference>
<dbReference type="PROSITE" id="PS00055">
    <property type="entry name" value="RIBOSOMAL_S12"/>
    <property type="match status" value="1"/>
</dbReference>
<reference key="1">
    <citation type="journal article" date="2006" name="Appl. Environ. Microbiol.">
        <title>Complete genome sequence of the marine, chemolithoautotrophic, ammonia-oxidizing bacterium Nitrosococcus oceani ATCC 19707.</title>
        <authorList>
            <person name="Klotz M.G."/>
            <person name="Arp D.J."/>
            <person name="Chain P.S.G."/>
            <person name="El-Sheikh A.F."/>
            <person name="Hauser L.J."/>
            <person name="Hommes N.G."/>
            <person name="Larimer F.W."/>
            <person name="Malfatti S.A."/>
            <person name="Norton J.M."/>
            <person name="Poret-Peterson A.T."/>
            <person name="Vergez L.M."/>
            <person name="Ward B.B."/>
        </authorList>
    </citation>
    <scope>NUCLEOTIDE SEQUENCE [LARGE SCALE GENOMIC DNA]</scope>
    <source>
        <strain>ATCC 19707 / BCRC 17464 / JCM 30415 / NCIMB 11848 / C-107</strain>
    </source>
</reference>
<organism>
    <name type="scientific">Nitrosococcus oceani (strain ATCC 19707 / BCRC 17464 / JCM 30415 / NCIMB 11848 / C-107)</name>
    <dbReference type="NCBI Taxonomy" id="323261"/>
    <lineage>
        <taxon>Bacteria</taxon>
        <taxon>Pseudomonadati</taxon>
        <taxon>Pseudomonadota</taxon>
        <taxon>Gammaproteobacteria</taxon>
        <taxon>Chromatiales</taxon>
        <taxon>Chromatiaceae</taxon>
        <taxon>Nitrosococcus</taxon>
    </lineage>
</organism>
<accession>Q3J8Q9</accession>
<proteinExistence type="inferred from homology"/>